<keyword id="KW-0963">Cytoplasm</keyword>
<keyword id="KW-0378">Hydrolase</keyword>
<keyword id="KW-0479">Metal-binding</keyword>
<keyword id="KW-0547">Nucleotide-binding</keyword>
<keyword id="KW-1185">Reference proteome</keyword>
<accession>Q32DP8</accession>
<dbReference type="EC" id="3.1.3.89" evidence="1"/>
<dbReference type="EMBL" id="CP000034">
    <property type="protein sequence ID" value="ABB62557.1"/>
    <property type="molecule type" value="Genomic_DNA"/>
</dbReference>
<dbReference type="RefSeq" id="WP_000813857.1">
    <property type="nucleotide sequence ID" value="NC_007606.1"/>
</dbReference>
<dbReference type="RefSeq" id="YP_404048.1">
    <property type="nucleotide sequence ID" value="NC_007606.1"/>
</dbReference>
<dbReference type="SMR" id="Q32DP8"/>
<dbReference type="STRING" id="300267.SDY_2487"/>
<dbReference type="EnsemblBacteria" id="ABB62557">
    <property type="protein sequence ID" value="ABB62557"/>
    <property type="gene ID" value="SDY_2487"/>
</dbReference>
<dbReference type="KEGG" id="sdy:SDY_2487"/>
<dbReference type="PATRIC" id="fig|300267.13.peg.2998"/>
<dbReference type="HOGENOM" id="CLU_084784_0_0_6"/>
<dbReference type="Proteomes" id="UP000002716">
    <property type="component" value="Chromosome"/>
</dbReference>
<dbReference type="GO" id="GO:0005737">
    <property type="term" value="C:cytoplasm"/>
    <property type="evidence" value="ECO:0007669"/>
    <property type="project" value="UniProtKB-SubCell"/>
</dbReference>
<dbReference type="GO" id="GO:0002953">
    <property type="term" value="F:5'-deoxynucleotidase activity"/>
    <property type="evidence" value="ECO:0007669"/>
    <property type="project" value="UniProtKB-EC"/>
</dbReference>
<dbReference type="GO" id="GO:0046872">
    <property type="term" value="F:metal ion binding"/>
    <property type="evidence" value="ECO:0007669"/>
    <property type="project" value="UniProtKB-KW"/>
</dbReference>
<dbReference type="GO" id="GO:0000166">
    <property type="term" value="F:nucleotide binding"/>
    <property type="evidence" value="ECO:0007669"/>
    <property type="project" value="UniProtKB-KW"/>
</dbReference>
<dbReference type="CDD" id="cd00077">
    <property type="entry name" value="HDc"/>
    <property type="match status" value="1"/>
</dbReference>
<dbReference type="FunFam" id="1.10.3210.10:FF:000002">
    <property type="entry name" value="Nucleotidase YfbR"/>
    <property type="match status" value="1"/>
</dbReference>
<dbReference type="Gene3D" id="1.10.3210.10">
    <property type="entry name" value="Hypothetical protein af1432"/>
    <property type="match status" value="1"/>
</dbReference>
<dbReference type="HAMAP" id="MF_01100">
    <property type="entry name" value="5DNU"/>
    <property type="match status" value="1"/>
</dbReference>
<dbReference type="InterPro" id="IPR003607">
    <property type="entry name" value="HD/PDEase_dom"/>
</dbReference>
<dbReference type="InterPro" id="IPR006674">
    <property type="entry name" value="HD_domain"/>
</dbReference>
<dbReference type="InterPro" id="IPR022971">
    <property type="entry name" value="YfbR"/>
</dbReference>
<dbReference type="InterPro" id="IPR039356">
    <property type="entry name" value="YfbR/HDDC2"/>
</dbReference>
<dbReference type="NCBIfam" id="NF003009">
    <property type="entry name" value="PRK03826.1"/>
    <property type="match status" value="1"/>
</dbReference>
<dbReference type="PANTHER" id="PTHR11845">
    <property type="entry name" value="5'-DEOXYNUCLEOTIDASE HDDC2"/>
    <property type="match status" value="1"/>
</dbReference>
<dbReference type="PANTHER" id="PTHR11845:SF13">
    <property type="entry name" value="5'-DEOXYNUCLEOTIDASE HDDC2"/>
    <property type="match status" value="1"/>
</dbReference>
<dbReference type="Pfam" id="PF12917">
    <property type="entry name" value="YfbR-like"/>
    <property type="match status" value="1"/>
</dbReference>
<dbReference type="SMART" id="SM00471">
    <property type="entry name" value="HDc"/>
    <property type="match status" value="1"/>
</dbReference>
<dbReference type="SUPFAM" id="SSF109604">
    <property type="entry name" value="HD-domain/PDEase-like"/>
    <property type="match status" value="1"/>
</dbReference>
<dbReference type="PROSITE" id="PS51831">
    <property type="entry name" value="HD"/>
    <property type="match status" value="1"/>
</dbReference>
<sequence length="199" mass="22636">MKQSHFFAHLSRLKLINRWPLMRNVRTENVSEHSLQVAMVAHALAAIKNRKFGGNVNAERIALLAMYHDASEVLTGDLPTPVKYFNSQIAQEYKAIEKIAQQKLVDMVPEELRDIFAPLIDEHAYSDEEKSLVKQADALCAYLKCLEELAAGNNEFLLAKTRLEATLAARRSQEMDYFMEVFVPSFHLSLDEISQDSPL</sequence>
<feature type="chain" id="PRO_1000064958" description="5'-deoxynucleotidase YfbR">
    <location>
        <begin position="1"/>
        <end position="199"/>
    </location>
</feature>
<feature type="domain" description="HD" evidence="2">
    <location>
        <begin position="30"/>
        <end position="142"/>
    </location>
</feature>
<feature type="binding site" evidence="1">
    <location>
        <begin position="18"/>
        <end position="19"/>
    </location>
    <ligand>
        <name>substrate</name>
    </ligand>
</feature>
<feature type="binding site" evidence="1">
    <location>
        <position position="33"/>
    </location>
    <ligand>
        <name>a divalent metal cation</name>
        <dbReference type="ChEBI" id="CHEBI:60240"/>
    </ligand>
</feature>
<feature type="binding site" evidence="1">
    <location>
        <position position="33"/>
    </location>
    <ligand>
        <name>substrate</name>
    </ligand>
</feature>
<feature type="binding site" evidence="1">
    <location>
        <position position="68"/>
    </location>
    <ligand>
        <name>a divalent metal cation</name>
        <dbReference type="ChEBI" id="CHEBI:60240"/>
    </ligand>
</feature>
<feature type="binding site" evidence="1">
    <location>
        <position position="69"/>
    </location>
    <ligand>
        <name>a divalent metal cation</name>
        <dbReference type="ChEBI" id="CHEBI:60240"/>
    </ligand>
</feature>
<feature type="binding site" evidence="1">
    <location>
        <position position="69"/>
    </location>
    <ligand>
        <name>substrate</name>
    </ligand>
</feature>
<feature type="binding site" evidence="1">
    <location>
        <begin position="77"/>
        <end position="80"/>
    </location>
    <ligand>
        <name>substrate</name>
    </ligand>
</feature>
<feature type="binding site" evidence="1">
    <location>
        <position position="137"/>
    </location>
    <ligand>
        <name>a divalent metal cation</name>
        <dbReference type="ChEBI" id="CHEBI:60240"/>
    </ligand>
</feature>
<feature type="binding site" evidence="1">
    <location>
        <position position="137"/>
    </location>
    <ligand>
        <name>substrate</name>
    </ligand>
</feature>
<feature type="site" description="Appears to be important in orienting the phosphate for catalysis" evidence="1">
    <location>
        <position position="18"/>
    </location>
</feature>
<evidence type="ECO:0000255" key="1">
    <source>
        <dbReference type="HAMAP-Rule" id="MF_01100"/>
    </source>
</evidence>
<evidence type="ECO:0000255" key="2">
    <source>
        <dbReference type="PROSITE-ProRule" id="PRU01175"/>
    </source>
</evidence>
<reference key="1">
    <citation type="journal article" date="2005" name="Nucleic Acids Res.">
        <title>Genome dynamics and diversity of Shigella species, the etiologic agents of bacillary dysentery.</title>
        <authorList>
            <person name="Yang F."/>
            <person name="Yang J."/>
            <person name="Zhang X."/>
            <person name="Chen L."/>
            <person name="Jiang Y."/>
            <person name="Yan Y."/>
            <person name="Tang X."/>
            <person name="Wang J."/>
            <person name="Xiong Z."/>
            <person name="Dong J."/>
            <person name="Xue Y."/>
            <person name="Zhu Y."/>
            <person name="Xu X."/>
            <person name="Sun L."/>
            <person name="Chen S."/>
            <person name="Nie H."/>
            <person name="Peng J."/>
            <person name="Xu J."/>
            <person name="Wang Y."/>
            <person name="Yuan Z."/>
            <person name="Wen Y."/>
            <person name="Yao Z."/>
            <person name="Shen Y."/>
            <person name="Qiang B."/>
            <person name="Hou Y."/>
            <person name="Yu J."/>
            <person name="Jin Q."/>
        </authorList>
    </citation>
    <scope>NUCLEOTIDE SEQUENCE [LARGE SCALE GENOMIC DNA]</scope>
    <source>
        <strain>Sd197</strain>
    </source>
</reference>
<proteinExistence type="inferred from homology"/>
<name>5DNU_SHIDS</name>
<gene>
    <name evidence="1" type="primary">yfbR</name>
    <name type="ordered locus">SDY_2487</name>
</gene>
<protein>
    <recommendedName>
        <fullName evidence="1">5'-deoxynucleotidase YfbR</fullName>
        <ecNumber evidence="1">3.1.3.89</ecNumber>
    </recommendedName>
    <alternativeName>
        <fullName evidence="1">5'-deoxyribonucleotidase</fullName>
    </alternativeName>
    <alternativeName>
        <fullName evidence="1">Nucleoside 5'-monophosphate phosphohydrolase</fullName>
    </alternativeName>
</protein>
<organism>
    <name type="scientific">Shigella dysenteriae serotype 1 (strain Sd197)</name>
    <dbReference type="NCBI Taxonomy" id="300267"/>
    <lineage>
        <taxon>Bacteria</taxon>
        <taxon>Pseudomonadati</taxon>
        <taxon>Pseudomonadota</taxon>
        <taxon>Gammaproteobacteria</taxon>
        <taxon>Enterobacterales</taxon>
        <taxon>Enterobacteriaceae</taxon>
        <taxon>Shigella</taxon>
    </lineage>
</organism>
<comment type="function">
    <text evidence="1">Catalyzes the strictly specific dephosphorylation of 2'-deoxyribonucleoside 5'-monophosphates.</text>
</comment>
<comment type="catalytic activity">
    <reaction evidence="1">
        <text>a 2'-deoxyribonucleoside 5'-phosphate + H2O = a 2'-deoxyribonucleoside + phosphate</text>
        <dbReference type="Rhea" id="RHEA:36167"/>
        <dbReference type="ChEBI" id="CHEBI:15377"/>
        <dbReference type="ChEBI" id="CHEBI:18274"/>
        <dbReference type="ChEBI" id="CHEBI:43474"/>
        <dbReference type="ChEBI" id="CHEBI:65317"/>
        <dbReference type="EC" id="3.1.3.89"/>
    </reaction>
</comment>
<comment type="cofactor">
    <cofactor evidence="1">
        <name>a divalent metal cation</name>
        <dbReference type="ChEBI" id="CHEBI:60240"/>
    </cofactor>
</comment>
<comment type="subunit">
    <text evidence="1">Homodimer.</text>
</comment>
<comment type="subcellular location">
    <subcellularLocation>
        <location evidence="1">Cytoplasm</location>
    </subcellularLocation>
</comment>
<comment type="similarity">
    <text evidence="1">Belongs to the 5DNU family.</text>
</comment>